<evidence type="ECO:0000255" key="1">
    <source>
        <dbReference type="HAMAP-Rule" id="MF_01102"/>
    </source>
</evidence>
<proteinExistence type="inferred from homology"/>
<accession>B1J5F1</accession>
<sequence>MPASTLLQHAQIDWDDQGRPHSRQYGDVYFAINEGIAETQHVFLEQTRLRQRFANLAPHGCLVIGETGFGTGMNFFCAWQLFAETAHADARLHFVSVEKYPLGHADMARAMRLWPELAAFTEPFLRQYVAVHQGFQQFTFDQGRITLTLLIGDVLEQLPQLDARIDVWFLDGFAPAKNPDMWTPELFTQLARLSHAGTALGTFTTTGWVRRSLIEAGFTMKKVPGIGKKWEVMSGEYTGPPNAPMSAPWYARPTAPEGPREALVIGAGLAGSASAASLAARGWQVTVLERHDAAAREASGNPQGVLYLKLSAHGTALSQMILSGFGYTRRQLELLQRGQDWDACGVLQLAFDSKEAERQGRLADAFEGSLLRAVQRNEAEAIAGVGLPAGGLFYTEGGWVHPPALCKAQLQHPNIRLLAHHDVLALRKADGLWQAWAGDRLLASAPMVVLAGAADVKRFEPCAQLPLKRIRGQITRLPVTDASRALATVVCAEGYVAPPRGEEHTLGASFDFHSDDLTPTVAEHQGNLAMLDEISTDLARRLGTAALAPEQLQGRAAFRCTSPDYLPIVGPVADPAAFAEAYAVLAKDARQVPEVPCPWLEGLYVNSGHGSRGLITAPLSGELIAAWVSGEPLPLPRAVAEACHPNRFGLRRLIRGK</sequence>
<comment type="function">
    <text evidence="1">Catalyzes the last two steps in the biosynthesis of 5-methylaminomethyl-2-thiouridine (mnm(5)s(2)U) at the wobble position (U34) in tRNA. Catalyzes the FAD-dependent demodification of cmnm(5)s(2)U34 to nm(5)s(2)U34, followed by the transfer of a methyl group from S-adenosyl-L-methionine to nm(5)s(2)U34, to form mnm(5)s(2)U34.</text>
</comment>
<comment type="catalytic activity">
    <reaction evidence="1">
        <text>5-aminomethyl-2-thiouridine(34) in tRNA + S-adenosyl-L-methionine = 5-methylaminomethyl-2-thiouridine(34) in tRNA + S-adenosyl-L-homocysteine + H(+)</text>
        <dbReference type="Rhea" id="RHEA:19569"/>
        <dbReference type="Rhea" id="RHEA-COMP:10195"/>
        <dbReference type="Rhea" id="RHEA-COMP:10197"/>
        <dbReference type="ChEBI" id="CHEBI:15378"/>
        <dbReference type="ChEBI" id="CHEBI:57856"/>
        <dbReference type="ChEBI" id="CHEBI:59789"/>
        <dbReference type="ChEBI" id="CHEBI:74454"/>
        <dbReference type="ChEBI" id="CHEBI:74455"/>
        <dbReference type="EC" id="2.1.1.61"/>
    </reaction>
</comment>
<comment type="cofactor">
    <cofactor evidence="1">
        <name>FAD</name>
        <dbReference type="ChEBI" id="CHEBI:57692"/>
    </cofactor>
</comment>
<comment type="subcellular location">
    <subcellularLocation>
        <location evidence="1">Cytoplasm</location>
    </subcellularLocation>
</comment>
<comment type="similarity">
    <text evidence="1">In the N-terminal section; belongs to the methyltransferase superfamily. tRNA (mnm(5)s(2)U34)-methyltransferase family.</text>
</comment>
<comment type="similarity">
    <text evidence="1">In the C-terminal section; belongs to the DAO family.</text>
</comment>
<organism>
    <name type="scientific">Pseudomonas putida (strain W619)</name>
    <dbReference type="NCBI Taxonomy" id="390235"/>
    <lineage>
        <taxon>Bacteria</taxon>
        <taxon>Pseudomonadati</taxon>
        <taxon>Pseudomonadota</taxon>
        <taxon>Gammaproteobacteria</taxon>
        <taxon>Pseudomonadales</taxon>
        <taxon>Pseudomonadaceae</taxon>
        <taxon>Pseudomonas</taxon>
    </lineage>
</organism>
<protein>
    <recommendedName>
        <fullName evidence="1">tRNA 5-methylaminomethyl-2-thiouridine biosynthesis bifunctional protein MnmC</fullName>
        <shortName evidence="1">tRNA mnm(5)s(2)U biosynthesis bifunctional protein</shortName>
    </recommendedName>
    <domain>
        <recommendedName>
            <fullName evidence="1">tRNA (mnm(5)s(2)U34)-methyltransferase</fullName>
            <ecNumber evidence="1">2.1.1.61</ecNumber>
        </recommendedName>
    </domain>
    <domain>
        <recommendedName>
            <fullName evidence="1">FAD-dependent cmnm(5)s(2)U34 oxidoreductase</fullName>
            <ecNumber evidence="1">1.5.-.-</ecNumber>
        </recommendedName>
    </domain>
</protein>
<feature type="chain" id="PRO_0000348012" description="tRNA 5-methylaminomethyl-2-thiouridine biosynthesis bifunctional protein MnmC">
    <location>
        <begin position="1"/>
        <end position="657"/>
    </location>
</feature>
<feature type="region of interest" description="tRNA (mnm(5)s(2)U34)-methyltransferase">
    <location>
        <begin position="1"/>
        <end position="238"/>
    </location>
</feature>
<feature type="region of interest" description="FAD-dependent cmnm(5)s(2)U34 oxidoreductase">
    <location>
        <begin position="265"/>
        <end position="657"/>
    </location>
</feature>
<gene>
    <name evidence="1" type="primary">mnmC</name>
    <name type="ordered locus">PputW619_1359</name>
</gene>
<reference key="1">
    <citation type="submission" date="2008-02" db="EMBL/GenBank/DDBJ databases">
        <title>Complete sequence of Pseudomonas putida W619.</title>
        <authorList>
            <person name="Copeland A."/>
            <person name="Lucas S."/>
            <person name="Lapidus A."/>
            <person name="Barry K."/>
            <person name="Detter J.C."/>
            <person name="Glavina del Rio T."/>
            <person name="Dalin E."/>
            <person name="Tice H."/>
            <person name="Pitluck S."/>
            <person name="Chain P."/>
            <person name="Malfatti S."/>
            <person name="Shin M."/>
            <person name="Vergez L."/>
            <person name="Schmutz J."/>
            <person name="Larimer F."/>
            <person name="Land M."/>
            <person name="Hauser L."/>
            <person name="Kyrpides N."/>
            <person name="Kim E."/>
            <person name="Taghavi S."/>
            <person name="Vangronsveld D."/>
            <person name="van der Lelie D."/>
            <person name="Richardson P."/>
        </authorList>
    </citation>
    <scope>NUCLEOTIDE SEQUENCE [LARGE SCALE GENOMIC DNA]</scope>
    <source>
        <strain>W619</strain>
    </source>
</reference>
<keyword id="KW-0963">Cytoplasm</keyword>
<keyword id="KW-0274">FAD</keyword>
<keyword id="KW-0285">Flavoprotein</keyword>
<keyword id="KW-0489">Methyltransferase</keyword>
<keyword id="KW-0511">Multifunctional enzyme</keyword>
<keyword id="KW-0560">Oxidoreductase</keyword>
<keyword id="KW-0949">S-adenosyl-L-methionine</keyword>
<keyword id="KW-0808">Transferase</keyword>
<keyword id="KW-0819">tRNA processing</keyword>
<name>MNMC_PSEPW</name>
<dbReference type="EC" id="2.1.1.61" evidence="1"/>
<dbReference type="EC" id="1.5.-.-" evidence="1"/>
<dbReference type="EMBL" id="CP000949">
    <property type="protein sequence ID" value="ACA71864.1"/>
    <property type="molecule type" value="Genomic_DNA"/>
</dbReference>
<dbReference type="SMR" id="B1J5F1"/>
<dbReference type="STRING" id="390235.PputW619_1359"/>
<dbReference type="KEGG" id="ppw:PputW619_1359"/>
<dbReference type="eggNOG" id="COG0665">
    <property type="taxonomic scope" value="Bacteria"/>
</dbReference>
<dbReference type="eggNOG" id="COG4121">
    <property type="taxonomic scope" value="Bacteria"/>
</dbReference>
<dbReference type="HOGENOM" id="CLU_022427_1_0_6"/>
<dbReference type="OrthoDB" id="9786494at2"/>
<dbReference type="GO" id="GO:0005737">
    <property type="term" value="C:cytoplasm"/>
    <property type="evidence" value="ECO:0007669"/>
    <property type="project" value="UniProtKB-SubCell"/>
</dbReference>
<dbReference type="GO" id="GO:0050660">
    <property type="term" value="F:flavin adenine dinucleotide binding"/>
    <property type="evidence" value="ECO:0007669"/>
    <property type="project" value="UniProtKB-UniRule"/>
</dbReference>
<dbReference type="GO" id="GO:0016645">
    <property type="term" value="F:oxidoreductase activity, acting on the CH-NH group of donors"/>
    <property type="evidence" value="ECO:0007669"/>
    <property type="project" value="InterPro"/>
</dbReference>
<dbReference type="GO" id="GO:0004808">
    <property type="term" value="F:tRNA (5-methylaminomethyl-2-thiouridylate)(34)-methyltransferase activity"/>
    <property type="evidence" value="ECO:0007669"/>
    <property type="project" value="UniProtKB-EC"/>
</dbReference>
<dbReference type="GO" id="GO:0032259">
    <property type="term" value="P:methylation"/>
    <property type="evidence" value="ECO:0007669"/>
    <property type="project" value="UniProtKB-KW"/>
</dbReference>
<dbReference type="GO" id="GO:0002098">
    <property type="term" value="P:tRNA wobble uridine modification"/>
    <property type="evidence" value="ECO:0007669"/>
    <property type="project" value="TreeGrafter"/>
</dbReference>
<dbReference type="Gene3D" id="3.30.9.10">
    <property type="entry name" value="D-Amino Acid Oxidase, subunit A, domain 2"/>
    <property type="match status" value="1"/>
</dbReference>
<dbReference type="Gene3D" id="3.50.50.60">
    <property type="entry name" value="FAD/NAD(P)-binding domain"/>
    <property type="match status" value="1"/>
</dbReference>
<dbReference type="Gene3D" id="3.40.50.150">
    <property type="entry name" value="Vaccinia Virus protein VP39"/>
    <property type="match status" value="1"/>
</dbReference>
<dbReference type="HAMAP" id="MF_01102">
    <property type="entry name" value="MnmC"/>
    <property type="match status" value="1"/>
</dbReference>
<dbReference type="InterPro" id="IPR006076">
    <property type="entry name" value="FAD-dep_OxRdtase"/>
</dbReference>
<dbReference type="InterPro" id="IPR036188">
    <property type="entry name" value="FAD/NAD-bd_sf"/>
</dbReference>
<dbReference type="InterPro" id="IPR008471">
    <property type="entry name" value="MnmC-like_methylTransf"/>
</dbReference>
<dbReference type="InterPro" id="IPR029063">
    <property type="entry name" value="SAM-dependent_MTases_sf"/>
</dbReference>
<dbReference type="InterPro" id="IPR023032">
    <property type="entry name" value="tRNA_MAMT_biosynth_bifunc_MnmC"/>
</dbReference>
<dbReference type="InterPro" id="IPR047785">
    <property type="entry name" value="tRNA_MNMC2"/>
</dbReference>
<dbReference type="InterPro" id="IPR017610">
    <property type="entry name" value="tRNA_S-uridine_synth_MnmC_C"/>
</dbReference>
<dbReference type="NCBIfam" id="TIGR03197">
    <property type="entry name" value="MnmC_Cterm"/>
    <property type="match status" value="1"/>
</dbReference>
<dbReference type="NCBIfam" id="NF002481">
    <property type="entry name" value="PRK01747.1-2"/>
    <property type="match status" value="1"/>
</dbReference>
<dbReference type="NCBIfam" id="NF033855">
    <property type="entry name" value="tRNA_MNMC2"/>
    <property type="match status" value="1"/>
</dbReference>
<dbReference type="PANTHER" id="PTHR13847">
    <property type="entry name" value="SARCOSINE DEHYDROGENASE-RELATED"/>
    <property type="match status" value="1"/>
</dbReference>
<dbReference type="PANTHER" id="PTHR13847:SF283">
    <property type="entry name" value="TRNA 5-METHYLAMINOMETHYL-2-THIOURIDINE BIOSYNTHESIS BIFUNCTIONAL PROTEIN MNMC"/>
    <property type="match status" value="1"/>
</dbReference>
<dbReference type="Pfam" id="PF01266">
    <property type="entry name" value="DAO"/>
    <property type="match status" value="1"/>
</dbReference>
<dbReference type="Pfam" id="PF05430">
    <property type="entry name" value="Methyltransf_30"/>
    <property type="match status" value="1"/>
</dbReference>
<dbReference type="SUPFAM" id="SSF51905">
    <property type="entry name" value="FAD/NAD(P)-binding domain"/>
    <property type="match status" value="1"/>
</dbReference>